<feature type="chain" id="PRO_0000154778" description="Large ribosomal subunit protein uL10">
    <location>
        <begin position="1"/>
        <end position="321"/>
    </location>
</feature>
<feature type="region of interest" description="Disordered" evidence="2">
    <location>
        <begin position="284"/>
        <end position="321"/>
    </location>
</feature>
<feature type="compositionally biased region" description="Acidic residues" evidence="2">
    <location>
        <begin position="306"/>
        <end position="321"/>
    </location>
</feature>
<accession>P29764</accession>
<organism>
    <name type="scientific">Oxybasis rubra</name>
    <name type="common">Red goosefoot</name>
    <name type="synonym">Chenopodium rubrum</name>
    <dbReference type="NCBI Taxonomy" id="3560"/>
    <lineage>
        <taxon>Eukaryota</taxon>
        <taxon>Viridiplantae</taxon>
        <taxon>Streptophyta</taxon>
        <taxon>Embryophyta</taxon>
        <taxon>Tracheophyta</taxon>
        <taxon>Spermatophyta</taxon>
        <taxon>Magnoliopsida</taxon>
        <taxon>eudicotyledons</taxon>
        <taxon>Gunneridae</taxon>
        <taxon>Pentapetalae</taxon>
        <taxon>Caryophyllales</taxon>
        <taxon>Chenopodiaceae</taxon>
        <taxon>Chenopodioideae</taxon>
        <taxon>Atripliceae</taxon>
        <taxon>Oxybasis</taxon>
    </lineage>
</organism>
<sequence length="321" mass="34351">MAVKPTKAEKKIAYDQKLCQLLDEYSQVLIASADNVGSNQLQAIRIGLRGDSIVLMGKNTMMKRSIRLHAENTGNENLRNVEQLFLPNVGLIFTKGDLNQVREEISKYKVGAPARFGLVAPIDVVVPPGNTGLDPSQTSFFQVLNIPTKINKGTVEIITAVELIKKGEKVGSSEAALLAKLGIRPFSYGLNVESVYDDGSVFSPEVLDLTEDDLLARFATGVSMVTSLSLAISYPTLAAAPHSSSMGATMFLLLLLQPTMTSLRPRKLRSISRILAVASCSCSSAGTAPTGGGAAAAAVEEKKEEPEEESDDDIGFSLFDD</sequence>
<proteinExistence type="evidence at transcript level"/>
<comment type="function">
    <text>Ribosomal protein P0 is the functional equivalent of E.coli protein L10.</text>
</comment>
<comment type="subunit">
    <text evidence="1">P0 forms a pentameric complex by interaction with dimers of P1 and P2.</text>
</comment>
<comment type="induction">
    <text>By blue light.</text>
</comment>
<comment type="PTM">
    <text evidence="1">Phosphorylated.</text>
</comment>
<comment type="similarity">
    <text evidence="3">Belongs to the universal ribosomal protein uL10 family.</text>
</comment>
<keyword id="KW-0597">Phosphoprotein</keyword>
<keyword id="KW-0687">Ribonucleoprotein</keyword>
<keyword id="KW-0689">Ribosomal protein</keyword>
<name>RLA0_OXYRB</name>
<protein>
    <recommendedName>
        <fullName evidence="3">Large ribosomal subunit protein uL10</fullName>
    </recommendedName>
    <alternativeName>
        <fullName>60S acidic ribosomal protein P0</fullName>
    </alternativeName>
    <alternativeName>
        <fullName>Light-induced 34 kDa protein</fullName>
    </alternativeName>
</protein>
<dbReference type="EMBL" id="X15206">
    <property type="protein sequence ID" value="CAA33276.1"/>
    <property type="molecule type" value="mRNA"/>
</dbReference>
<dbReference type="PIR" id="S21519">
    <property type="entry name" value="R5UBP0"/>
</dbReference>
<dbReference type="SMR" id="P29764"/>
<dbReference type="GO" id="GO:0022625">
    <property type="term" value="C:cytosolic large ribosomal subunit"/>
    <property type="evidence" value="ECO:0007669"/>
    <property type="project" value="TreeGrafter"/>
</dbReference>
<dbReference type="GO" id="GO:0070180">
    <property type="term" value="F:large ribosomal subunit rRNA binding"/>
    <property type="evidence" value="ECO:0007669"/>
    <property type="project" value="TreeGrafter"/>
</dbReference>
<dbReference type="GO" id="GO:0003735">
    <property type="term" value="F:structural constituent of ribosome"/>
    <property type="evidence" value="ECO:0007669"/>
    <property type="project" value="TreeGrafter"/>
</dbReference>
<dbReference type="GO" id="GO:0002181">
    <property type="term" value="P:cytoplasmic translation"/>
    <property type="evidence" value="ECO:0007669"/>
    <property type="project" value="TreeGrafter"/>
</dbReference>
<dbReference type="GO" id="GO:0000027">
    <property type="term" value="P:ribosomal large subunit assembly"/>
    <property type="evidence" value="ECO:0007669"/>
    <property type="project" value="TreeGrafter"/>
</dbReference>
<dbReference type="CDD" id="cd05795">
    <property type="entry name" value="Ribosomal_P0_L10e"/>
    <property type="match status" value="1"/>
</dbReference>
<dbReference type="FunFam" id="3.90.105.20:FF:000001">
    <property type="entry name" value="60S acidic ribosomal protein P0"/>
    <property type="match status" value="1"/>
</dbReference>
<dbReference type="Gene3D" id="3.30.70.1730">
    <property type="match status" value="1"/>
</dbReference>
<dbReference type="Gene3D" id="3.90.105.20">
    <property type="match status" value="1"/>
</dbReference>
<dbReference type="InterPro" id="IPR050323">
    <property type="entry name" value="Ribosomal_protein_uL10"/>
</dbReference>
<dbReference type="InterPro" id="IPR001790">
    <property type="entry name" value="Ribosomal_uL10"/>
</dbReference>
<dbReference type="InterPro" id="IPR040637">
    <property type="entry name" value="Ribosomal_uL10-like_insert"/>
</dbReference>
<dbReference type="InterPro" id="IPR043164">
    <property type="entry name" value="Ribosomal_uL10-like_insert_sf"/>
</dbReference>
<dbReference type="InterPro" id="IPR043141">
    <property type="entry name" value="Ribosomal_uL10-like_sf"/>
</dbReference>
<dbReference type="InterPro" id="IPR030670">
    <property type="entry name" value="uL10_eukaryotes"/>
</dbReference>
<dbReference type="PANTHER" id="PTHR45699">
    <property type="entry name" value="60S ACIDIC RIBOSOMAL PROTEIN P0"/>
    <property type="match status" value="1"/>
</dbReference>
<dbReference type="PANTHER" id="PTHR45699:SF3">
    <property type="entry name" value="LARGE RIBOSOMAL SUBUNIT PROTEIN UL10"/>
    <property type="match status" value="1"/>
</dbReference>
<dbReference type="Pfam" id="PF00428">
    <property type="entry name" value="Ribosomal_60s"/>
    <property type="match status" value="1"/>
</dbReference>
<dbReference type="Pfam" id="PF00466">
    <property type="entry name" value="Ribosomal_L10"/>
    <property type="match status" value="1"/>
</dbReference>
<dbReference type="Pfam" id="PF17777">
    <property type="entry name" value="RL10P_insert"/>
    <property type="match status" value="1"/>
</dbReference>
<dbReference type="PIRSF" id="PIRSF039087">
    <property type="entry name" value="L10E"/>
    <property type="match status" value="1"/>
</dbReference>
<dbReference type="SUPFAM" id="SSF160369">
    <property type="entry name" value="Ribosomal protein L10-like"/>
    <property type="match status" value="1"/>
</dbReference>
<reference key="1">
    <citation type="submission" date="1989-05" db="EMBL/GenBank/DDBJ databases">
        <authorList>
            <person name="Kaldenhoff R."/>
            <person name="Richter G."/>
        </authorList>
    </citation>
    <scope>NUCLEOTIDE SEQUENCE [MRNA]</scope>
</reference>
<evidence type="ECO:0000250" key="1"/>
<evidence type="ECO:0000256" key="2">
    <source>
        <dbReference type="SAM" id="MobiDB-lite"/>
    </source>
</evidence>
<evidence type="ECO:0000305" key="3"/>